<protein>
    <recommendedName>
        <fullName evidence="1">Mitochondrial distribution and morphology protein 10</fullName>
    </recommendedName>
    <alternativeName>
        <fullName evidence="1">Mitochondrial inheritance component mdm10</fullName>
    </alternativeName>
</protein>
<name>MDM10_NEUCR</name>
<comment type="function">
    <text evidence="1">Component of the ERMES/MDM complex, which serves as a molecular tether to connect the endoplasmic reticulum and mitochondria. Components of this complex are involved in the control of mitochondrial shape and protein biogenesis and may function in phospholipid exchange. mdm10 is involved in the late assembly steps of the general translocase of the mitochondrial outer membrane (TOM complex). Functions in the tom40-specific route of the assembly of outer membrane beta-barrel proteins, including the association of tom40 with the receptor tom22 and small TOM proteins. Can associate with the SAM(core) complex as well as the mdm12-mmm-1 complex, both involved in late steps of the major beta-barrel assembly pathway, that is responsible for biogenesis of all outer membrane beta-barrel proteins. May act as a switch that shuttles between both complexes and channels precursor proteins into the tom40-specific pathway. Plays a role in mitochondrial morphology and in the inheritance of mitochondria.</text>
</comment>
<comment type="subunit">
    <text evidence="1">Component of the ER-mitochondria encounter structure (ERMES) or MDM complex, composed of mmm-1, mdm10, mdm12 and mdm34. Associates with the mitochondrial outer membrane sorting assembly machinery SAM(core) complex.</text>
</comment>
<comment type="subcellular location">
    <subcellularLocation>
        <location evidence="1">Mitochondrion outer membrane</location>
        <topology evidence="1">Multi-pass membrane protein</topology>
    </subcellularLocation>
    <text evidence="1">The ERMES/MDM complex localizes to a few discrete foci (around 10 per single cell), that represent mitochondria-endoplasmic reticulum junctions. These foci are often found next to mtDNA nucleoids.</text>
</comment>
<comment type="domain">
    <text>Lacks alpha-helical transmembrane segments, suggesting that it resides in the membrane via beta-sheet conformations similar to those predicted for other outer membrane proteins and porin.</text>
</comment>
<comment type="similarity">
    <text evidence="1">Belongs to the MDM10 family.</text>
</comment>
<sequence>MREFMNYITNAFYGATGWNEDNKYNELNATSRELIDFPLPRGLRLTLSSLATPHFATSYQLGSVGVVDGSISYLHSSIPLTHIAAQSDKIPLPALLRCYRRLHDLRSPGQQHYILDADPLSGLPPPPQSARALLGAASDAAVAGGALDGGNTDQDLGIYTHSLLYGRLYLPKSLLEGMIIKRFTQALQVQVRAVSEQSLRNGGTILGLVQYDKGKYGLEGLYSTDGGLLGFRGLYNFGGDASSSTCDPWTPTPGENNNNNNNNNNNNNGNAQAGEKERIYGRFSVGGELYYGTLNKSGGMSLGARFATLPAHRGTPLTATLTINPLMGNINATYALLAREYCSLATRVDFNVYSYESEWAVGMELWSNRRPAGFLLGASPSNDFEPEPHPPRKKERSFQAKMEWRLDDPEPEPEPQPTPKTRKNDEYKGVLKARLDNNLRMGLLWEGRAKSLIFSIGTGIDLHKLGEPFRSLGLEVQYSS</sequence>
<accession>Q7SBE0</accession>
<organism>
    <name type="scientific">Neurospora crassa (strain ATCC 24698 / 74-OR23-1A / CBS 708.71 / DSM 1257 / FGSC 987)</name>
    <dbReference type="NCBI Taxonomy" id="367110"/>
    <lineage>
        <taxon>Eukaryota</taxon>
        <taxon>Fungi</taxon>
        <taxon>Dikarya</taxon>
        <taxon>Ascomycota</taxon>
        <taxon>Pezizomycotina</taxon>
        <taxon>Sordariomycetes</taxon>
        <taxon>Sordariomycetidae</taxon>
        <taxon>Sordariales</taxon>
        <taxon>Sordariaceae</taxon>
        <taxon>Neurospora</taxon>
    </lineage>
</organism>
<gene>
    <name type="primary">mdm10</name>
    <name type="ORF">NCU07824</name>
</gene>
<reference key="1">
    <citation type="journal article" date="2003" name="Nature">
        <title>The genome sequence of the filamentous fungus Neurospora crassa.</title>
        <authorList>
            <person name="Galagan J.E."/>
            <person name="Calvo S.E."/>
            <person name="Borkovich K.A."/>
            <person name="Selker E.U."/>
            <person name="Read N.D."/>
            <person name="Jaffe D.B."/>
            <person name="FitzHugh W."/>
            <person name="Ma L.-J."/>
            <person name="Smirnov S."/>
            <person name="Purcell S."/>
            <person name="Rehman B."/>
            <person name="Elkins T."/>
            <person name="Engels R."/>
            <person name="Wang S."/>
            <person name="Nielsen C.B."/>
            <person name="Butler J."/>
            <person name="Endrizzi M."/>
            <person name="Qui D."/>
            <person name="Ianakiev P."/>
            <person name="Bell-Pedersen D."/>
            <person name="Nelson M.A."/>
            <person name="Werner-Washburne M."/>
            <person name="Selitrennikoff C.P."/>
            <person name="Kinsey J.A."/>
            <person name="Braun E.L."/>
            <person name="Zelter A."/>
            <person name="Schulte U."/>
            <person name="Kothe G.O."/>
            <person name="Jedd G."/>
            <person name="Mewes H.-W."/>
            <person name="Staben C."/>
            <person name="Marcotte E."/>
            <person name="Greenberg D."/>
            <person name="Roy A."/>
            <person name="Foley K."/>
            <person name="Naylor J."/>
            <person name="Stange-Thomann N."/>
            <person name="Barrett R."/>
            <person name="Gnerre S."/>
            <person name="Kamal M."/>
            <person name="Kamvysselis M."/>
            <person name="Mauceli E.W."/>
            <person name="Bielke C."/>
            <person name="Rudd S."/>
            <person name="Frishman D."/>
            <person name="Krystofova S."/>
            <person name="Rasmussen C."/>
            <person name="Metzenberg R.L."/>
            <person name="Perkins D.D."/>
            <person name="Kroken S."/>
            <person name="Cogoni C."/>
            <person name="Macino G."/>
            <person name="Catcheside D.E.A."/>
            <person name="Li W."/>
            <person name="Pratt R.J."/>
            <person name="Osmani S.A."/>
            <person name="DeSouza C.P.C."/>
            <person name="Glass N.L."/>
            <person name="Orbach M.J."/>
            <person name="Berglund J.A."/>
            <person name="Voelker R."/>
            <person name="Yarden O."/>
            <person name="Plamann M."/>
            <person name="Seiler S."/>
            <person name="Dunlap J.C."/>
            <person name="Radford A."/>
            <person name="Aramayo R."/>
            <person name="Natvig D.O."/>
            <person name="Alex L.A."/>
            <person name="Mannhaupt G."/>
            <person name="Ebbole D.J."/>
            <person name="Freitag M."/>
            <person name="Paulsen I."/>
            <person name="Sachs M.S."/>
            <person name="Lander E.S."/>
            <person name="Nusbaum C."/>
            <person name="Birren B.W."/>
        </authorList>
    </citation>
    <scope>NUCLEOTIDE SEQUENCE [LARGE SCALE GENOMIC DNA]</scope>
    <source>
        <strain>ATCC 24698 / 74-OR23-1A / CBS 708.71 / DSM 1257 / FGSC 987</strain>
    </source>
</reference>
<keyword id="KW-0472">Membrane</keyword>
<keyword id="KW-0496">Mitochondrion</keyword>
<keyword id="KW-1000">Mitochondrion outer membrane</keyword>
<keyword id="KW-1185">Reference proteome</keyword>
<keyword id="KW-0812">Transmembrane</keyword>
<keyword id="KW-1134">Transmembrane beta strand</keyword>
<proteinExistence type="inferred from homology"/>
<evidence type="ECO:0000255" key="1">
    <source>
        <dbReference type="HAMAP-Rule" id="MF_03102"/>
    </source>
</evidence>
<evidence type="ECO:0000256" key="2">
    <source>
        <dbReference type="SAM" id="MobiDB-lite"/>
    </source>
</evidence>
<feature type="chain" id="PRO_0000384187" description="Mitochondrial distribution and morphology protein 10">
    <location>
        <begin position="1"/>
        <end position="480"/>
    </location>
</feature>
<feature type="region of interest" description="Disordered" evidence="2">
    <location>
        <begin position="245"/>
        <end position="272"/>
    </location>
</feature>
<feature type="region of interest" description="Disordered" evidence="2">
    <location>
        <begin position="377"/>
        <end position="429"/>
    </location>
</feature>
<feature type="compositionally biased region" description="Low complexity" evidence="2">
    <location>
        <begin position="256"/>
        <end position="270"/>
    </location>
</feature>
<feature type="compositionally biased region" description="Basic and acidic residues" evidence="2">
    <location>
        <begin position="386"/>
        <end position="408"/>
    </location>
</feature>
<dbReference type="EMBL" id="CM002238">
    <property type="protein sequence ID" value="EAA33709.3"/>
    <property type="molecule type" value="Genomic_DNA"/>
</dbReference>
<dbReference type="RefSeq" id="XP_962945.3">
    <property type="nucleotide sequence ID" value="XM_957852.3"/>
</dbReference>
<dbReference type="SMR" id="Q7SBE0"/>
<dbReference type="FunCoup" id="Q7SBE0">
    <property type="interactions" value="52"/>
</dbReference>
<dbReference type="STRING" id="367110.Q7SBE0"/>
<dbReference type="EnsemblFungi" id="EAA33709">
    <property type="protein sequence ID" value="EAA33709"/>
    <property type="gene ID" value="NCU07824"/>
</dbReference>
<dbReference type="GeneID" id="3879093"/>
<dbReference type="KEGG" id="ncr:NCU07824"/>
<dbReference type="VEuPathDB" id="FungiDB:NCU07824"/>
<dbReference type="HOGENOM" id="CLU_026505_0_0_1"/>
<dbReference type="InParanoid" id="Q7SBE0"/>
<dbReference type="OrthoDB" id="2103793at2759"/>
<dbReference type="Proteomes" id="UP000001805">
    <property type="component" value="Chromosome 3, Linkage Group III"/>
</dbReference>
<dbReference type="GO" id="GO:0032865">
    <property type="term" value="C:ERMES complex"/>
    <property type="evidence" value="ECO:0000318"/>
    <property type="project" value="GO_Central"/>
</dbReference>
<dbReference type="GO" id="GO:0001401">
    <property type="term" value="C:SAM complex"/>
    <property type="evidence" value="ECO:0000318"/>
    <property type="project" value="GO_Central"/>
</dbReference>
<dbReference type="GO" id="GO:0051654">
    <property type="term" value="P:establishment of mitochondrion localization"/>
    <property type="evidence" value="ECO:0000318"/>
    <property type="project" value="GO_Central"/>
</dbReference>
<dbReference type="GO" id="GO:0000002">
    <property type="term" value="P:mitochondrial genome maintenance"/>
    <property type="evidence" value="ECO:0007669"/>
    <property type="project" value="UniProtKB-UniRule"/>
</dbReference>
<dbReference type="GO" id="GO:0070096">
    <property type="term" value="P:mitochondrial outer membrane translocase complex assembly"/>
    <property type="evidence" value="ECO:0000318"/>
    <property type="project" value="GO_Central"/>
</dbReference>
<dbReference type="GO" id="GO:1990456">
    <property type="term" value="P:mitochondrion-endoplasmic reticulum membrane tethering"/>
    <property type="evidence" value="ECO:0000318"/>
    <property type="project" value="GO_Central"/>
</dbReference>
<dbReference type="GO" id="GO:0015914">
    <property type="term" value="P:phospholipid transport"/>
    <property type="evidence" value="ECO:0000318"/>
    <property type="project" value="GO_Central"/>
</dbReference>
<dbReference type="GO" id="GO:0045040">
    <property type="term" value="P:protein insertion into mitochondrial outer membrane"/>
    <property type="evidence" value="ECO:0000318"/>
    <property type="project" value="GO_Central"/>
</dbReference>
<dbReference type="HAMAP" id="MF_03102">
    <property type="entry name" value="Mdm10"/>
    <property type="match status" value="1"/>
</dbReference>
<dbReference type="InterPro" id="IPR027539">
    <property type="entry name" value="Mdm10"/>
</dbReference>
<dbReference type="PANTHER" id="PTHR28035">
    <property type="entry name" value="MITOCHONDRIAL DISTRIBUTION AND MORPHOLOGY PROTEIN 10"/>
    <property type="match status" value="1"/>
</dbReference>
<dbReference type="PANTHER" id="PTHR28035:SF1">
    <property type="entry name" value="MITOCHONDRIAL DISTRIBUTION AND MORPHOLOGY PROTEIN 10"/>
    <property type="match status" value="1"/>
</dbReference>
<dbReference type="Pfam" id="PF12519">
    <property type="entry name" value="MDM10"/>
    <property type="match status" value="1"/>
</dbReference>